<feature type="chain" id="PRO_0000151128" description="Undecaprenyl-diphosphatase">
    <location>
        <begin position="1"/>
        <end position="267"/>
    </location>
</feature>
<feature type="transmembrane region" description="Helical" evidence="1">
    <location>
        <begin position="4"/>
        <end position="24"/>
    </location>
</feature>
<feature type="transmembrane region" description="Helical" evidence="1">
    <location>
        <begin position="41"/>
        <end position="61"/>
    </location>
</feature>
<feature type="transmembrane region" description="Helical" evidence="1">
    <location>
        <begin position="69"/>
        <end position="89"/>
    </location>
</feature>
<feature type="transmembrane region" description="Helical" evidence="1">
    <location>
        <begin position="96"/>
        <end position="116"/>
    </location>
</feature>
<feature type="transmembrane region" description="Helical" evidence="1">
    <location>
        <begin position="173"/>
        <end position="193"/>
    </location>
</feature>
<feature type="transmembrane region" description="Helical" evidence="1">
    <location>
        <begin position="207"/>
        <end position="227"/>
    </location>
</feature>
<feature type="transmembrane region" description="Helical" evidence="1">
    <location>
        <begin position="239"/>
        <end position="259"/>
    </location>
</feature>
<feature type="sequence conflict" description="In Ref. 2; CAA53663." evidence="2" ref="2">
    <original>I</original>
    <variation>V</variation>
    <location>
        <position position="21"/>
    </location>
</feature>
<feature type="sequence conflict" description="In Ref. 2; CAA53663." evidence="2" ref="2">
    <original>F</original>
    <variation>L</variation>
    <location>
        <position position="113"/>
    </location>
</feature>
<comment type="function">
    <text evidence="1">Catalyzes the dephosphorylation of undecaprenyl diphosphate (UPP). Confers resistance to bacitracin.</text>
</comment>
<comment type="catalytic activity">
    <reaction evidence="1">
        <text>di-trans,octa-cis-undecaprenyl diphosphate + H2O = di-trans,octa-cis-undecaprenyl phosphate + phosphate + H(+)</text>
        <dbReference type="Rhea" id="RHEA:28094"/>
        <dbReference type="ChEBI" id="CHEBI:15377"/>
        <dbReference type="ChEBI" id="CHEBI:15378"/>
        <dbReference type="ChEBI" id="CHEBI:43474"/>
        <dbReference type="ChEBI" id="CHEBI:58405"/>
        <dbReference type="ChEBI" id="CHEBI:60392"/>
        <dbReference type="EC" id="3.6.1.27"/>
    </reaction>
</comment>
<comment type="subcellular location">
    <subcellularLocation>
        <location evidence="1">Cell inner membrane</location>
        <topology evidence="1">Multi-pass membrane protein</topology>
    </subcellularLocation>
</comment>
<comment type="miscellaneous">
    <text>Bacitracin is thought to be involved in the inhibition of peptidoglycan synthesis by sequestering undecaprenyl diphosphate, thereby reducing the pool of lipid carrier available.</text>
</comment>
<comment type="similarity">
    <text evidence="1">Belongs to the UppP family.</text>
</comment>
<sequence>MENLYALILGIIEGLTEFLPISSTGHMILGTTILGIDIDEFWKSFLIIIQLGSILAVIFVFWRKLFQGLDIWLKLAVGFFPTGVIGLFVAKYLNALFNGWVVVGMLIFGGVVFILIELAHKNKQYRINSLEEISFKQAFCIGIFQSLAMIPGTSRSGASIIGGLLLEFNRKVAAEFSFLLAIPTMIIATAYSIYKEPELLGNANSLIPLGIGFITAFIVAVLVIKFFLKFISKFDFIPFGIYRIILGFVFFYLYYSGILNAGSEFKL</sequence>
<organism>
    <name type="scientific">Campylobacter jejuni subsp. jejuni serotype O:2 (strain ATCC 700819 / NCTC 11168)</name>
    <dbReference type="NCBI Taxonomy" id="192222"/>
    <lineage>
        <taxon>Bacteria</taxon>
        <taxon>Pseudomonadati</taxon>
        <taxon>Campylobacterota</taxon>
        <taxon>Epsilonproteobacteria</taxon>
        <taxon>Campylobacterales</taxon>
        <taxon>Campylobacteraceae</taxon>
        <taxon>Campylobacter</taxon>
    </lineage>
</organism>
<accession>Q9PIS4</accession>
<accession>Q0PBT4</accession>
<accession>Q46111</accession>
<reference key="1">
    <citation type="journal article" date="2000" name="Nature">
        <title>The genome sequence of the food-borne pathogen Campylobacter jejuni reveals hypervariable sequences.</title>
        <authorList>
            <person name="Parkhill J."/>
            <person name="Wren B.W."/>
            <person name="Mungall K.L."/>
            <person name="Ketley J.M."/>
            <person name="Churcher C.M."/>
            <person name="Basham D."/>
            <person name="Chillingworth T."/>
            <person name="Davies R.M."/>
            <person name="Feltwell T."/>
            <person name="Holroyd S."/>
            <person name="Jagels K."/>
            <person name="Karlyshev A.V."/>
            <person name="Moule S."/>
            <person name="Pallen M.J."/>
            <person name="Penn C.W."/>
            <person name="Quail M.A."/>
            <person name="Rajandream M.A."/>
            <person name="Rutherford K.M."/>
            <person name="van Vliet A.H.M."/>
            <person name="Whitehead S."/>
            <person name="Barrell B.G."/>
        </authorList>
    </citation>
    <scope>NUCLEOTIDE SEQUENCE [LARGE SCALE GENOMIC DNA]</scope>
    <source>
        <strain>ATCC 700819 / NCTC 11168</strain>
    </source>
</reference>
<reference key="2">
    <citation type="journal article" date="1995" name="Gene">
        <title>Identification of Campylobacter jejuni and C.coli using the rpoB gene and a cryptic DNA fragment from C.jejuni.</title>
        <authorList>
            <person name="Bustamante V.H."/>
            <person name="Puente J.L."/>
            <person name="Sanchez-Lopez F."/>
            <person name="Bobadilla M."/>
            <person name="Calva E."/>
        </authorList>
    </citation>
    <scope>NUCLEOTIDE SEQUENCE [GENOMIC DNA] OF 1-138</scope>
    <source>
        <strain>386-IP</strain>
    </source>
</reference>
<protein>
    <recommendedName>
        <fullName evidence="1">Undecaprenyl-diphosphatase</fullName>
        <ecNumber evidence="1">3.6.1.27</ecNumber>
    </recommendedName>
    <alternativeName>
        <fullName evidence="1">Bacitracin resistance protein</fullName>
    </alternativeName>
    <alternativeName>
        <fullName evidence="1">Undecaprenyl pyrophosphate phosphatase</fullName>
    </alternativeName>
</protein>
<gene>
    <name evidence="1" type="primary">uppP</name>
    <name type="synonym">bacA</name>
    <name type="synonym">upk</name>
    <name type="ordered locus">Cj0205</name>
</gene>
<evidence type="ECO:0000255" key="1">
    <source>
        <dbReference type="HAMAP-Rule" id="MF_01006"/>
    </source>
</evidence>
<evidence type="ECO:0000305" key="2"/>
<proteinExistence type="inferred from homology"/>
<name>UPPP_CAMJE</name>
<keyword id="KW-0046">Antibiotic resistance</keyword>
<keyword id="KW-0997">Cell inner membrane</keyword>
<keyword id="KW-1003">Cell membrane</keyword>
<keyword id="KW-0133">Cell shape</keyword>
<keyword id="KW-0961">Cell wall biogenesis/degradation</keyword>
<keyword id="KW-0378">Hydrolase</keyword>
<keyword id="KW-0472">Membrane</keyword>
<keyword id="KW-0573">Peptidoglycan synthesis</keyword>
<keyword id="KW-1185">Reference proteome</keyword>
<keyword id="KW-0812">Transmembrane</keyword>
<keyword id="KW-1133">Transmembrane helix</keyword>
<dbReference type="EC" id="3.6.1.27" evidence="1"/>
<dbReference type="EMBL" id="AL111168">
    <property type="protein sequence ID" value="CAL34374.1"/>
    <property type="molecule type" value="Genomic_DNA"/>
</dbReference>
<dbReference type="EMBL" id="X76062">
    <property type="protein sequence ID" value="CAA53663.1"/>
    <property type="molecule type" value="Genomic_DNA"/>
</dbReference>
<dbReference type="PIR" id="D81439">
    <property type="entry name" value="D81439"/>
</dbReference>
<dbReference type="PIR" id="S38664">
    <property type="entry name" value="S38664"/>
</dbReference>
<dbReference type="RefSeq" id="WP_002836742.1">
    <property type="nucleotide sequence ID" value="NZ_SZUC01000006.1"/>
</dbReference>
<dbReference type="RefSeq" id="YP_002343663.1">
    <property type="nucleotide sequence ID" value="NC_002163.1"/>
</dbReference>
<dbReference type="SMR" id="Q9PIS4"/>
<dbReference type="STRING" id="192222.Cj0205"/>
<dbReference type="PaxDb" id="192222-Cj0205"/>
<dbReference type="EnsemblBacteria" id="CAL34374">
    <property type="protein sequence ID" value="CAL34374"/>
    <property type="gene ID" value="Cj0205"/>
</dbReference>
<dbReference type="GeneID" id="904549"/>
<dbReference type="KEGG" id="cje:Cj0205"/>
<dbReference type="PATRIC" id="fig|192222.6.peg.202"/>
<dbReference type="eggNOG" id="COG1968">
    <property type="taxonomic scope" value="Bacteria"/>
</dbReference>
<dbReference type="HOGENOM" id="CLU_060296_2_0_7"/>
<dbReference type="OrthoDB" id="9808289at2"/>
<dbReference type="Proteomes" id="UP000000799">
    <property type="component" value="Chromosome"/>
</dbReference>
<dbReference type="GO" id="GO:0005886">
    <property type="term" value="C:plasma membrane"/>
    <property type="evidence" value="ECO:0007669"/>
    <property type="project" value="UniProtKB-SubCell"/>
</dbReference>
<dbReference type="GO" id="GO:0050380">
    <property type="term" value="F:undecaprenyl-diphosphatase activity"/>
    <property type="evidence" value="ECO:0007669"/>
    <property type="project" value="UniProtKB-UniRule"/>
</dbReference>
<dbReference type="GO" id="GO:0071555">
    <property type="term" value="P:cell wall organization"/>
    <property type="evidence" value="ECO:0007669"/>
    <property type="project" value="UniProtKB-KW"/>
</dbReference>
<dbReference type="GO" id="GO:0009252">
    <property type="term" value="P:peptidoglycan biosynthetic process"/>
    <property type="evidence" value="ECO:0007669"/>
    <property type="project" value="UniProtKB-KW"/>
</dbReference>
<dbReference type="GO" id="GO:0008360">
    <property type="term" value="P:regulation of cell shape"/>
    <property type="evidence" value="ECO:0007669"/>
    <property type="project" value="UniProtKB-KW"/>
</dbReference>
<dbReference type="GO" id="GO:0046677">
    <property type="term" value="P:response to antibiotic"/>
    <property type="evidence" value="ECO:0007669"/>
    <property type="project" value="UniProtKB-UniRule"/>
</dbReference>
<dbReference type="HAMAP" id="MF_01006">
    <property type="entry name" value="Undec_diphosphatase"/>
    <property type="match status" value="1"/>
</dbReference>
<dbReference type="InterPro" id="IPR003824">
    <property type="entry name" value="UppP"/>
</dbReference>
<dbReference type="NCBIfam" id="NF001390">
    <property type="entry name" value="PRK00281.1-4"/>
    <property type="match status" value="1"/>
</dbReference>
<dbReference type="NCBIfam" id="TIGR00753">
    <property type="entry name" value="undec_PP_bacA"/>
    <property type="match status" value="1"/>
</dbReference>
<dbReference type="PANTHER" id="PTHR30622">
    <property type="entry name" value="UNDECAPRENYL-DIPHOSPHATASE"/>
    <property type="match status" value="1"/>
</dbReference>
<dbReference type="PANTHER" id="PTHR30622:SF3">
    <property type="entry name" value="UNDECAPRENYL-DIPHOSPHATASE"/>
    <property type="match status" value="1"/>
</dbReference>
<dbReference type="Pfam" id="PF02673">
    <property type="entry name" value="BacA"/>
    <property type="match status" value="1"/>
</dbReference>